<reference key="1">
    <citation type="submission" date="2009-02" db="EMBL/GenBank/DDBJ databases">
        <title>Vibrio splendidus str. LGP32 complete genome.</title>
        <authorList>
            <person name="Mazel D."/>
            <person name="Le Roux F."/>
        </authorList>
    </citation>
    <scope>NUCLEOTIDE SEQUENCE [LARGE SCALE GENOMIC DNA]</scope>
    <source>
        <strain>LGP32</strain>
    </source>
</reference>
<comment type="function">
    <text evidence="1">Specifically methylates the cytosine at position 1407 (m5C1407) of 16S rRNA.</text>
</comment>
<comment type="catalytic activity">
    <reaction evidence="1">
        <text>cytidine(1407) in 16S rRNA + S-adenosyl-L-methionine = 5-methylcytidine(1407) in 16S rRNA + S-adenosyl-L-homocysteine + H(+)</text>
        <dbReference type="Rhea" id="RHEA:42756"/>
        <dbReference type="Rhea" id="RHEA-COMP:10223"/>
        <dbReference type="Rhea" id="RHEA-COMP:10224"/>
        <dbReference type="ChEBI" id="CHEBI:15378"/>
        <dbReference type="ChEBI" id="CHEBI:57856"/>
        <dbReference type="ChEBI" id="CHEBI:59789"/>
        <dbReference type="ChEBI" id="CHEBI:74483"/>
        <dbReference type="ChEBI" id="CHEBI:82748"/>
        <dbReference type="EC" id="2.1.1.178"/>
    </reaction>
</comment>
<comment type="subcellular location">
    <subcellularLocation>
        <location evidence="1">Cytoplasm</location>
    </subcellularLocation>
</comment>
<comment type="similarity">
    <text evidence="1">Belongs to the class I-like SAM-binding methyltransferase superfamily. RsmB/NOP family.</text>
</comment>
<accession>B7VNJ8</accession>
<keyword id="KW-0963">Cytoplasm</keyword>
<keyword id="KW-0489">Methyltransferase</keyword>
<keyword id="KW-0694">RNA-binding</keyword>
<keyword id="KW-0698">rRNA processing</keyword>
<keyword id="KW-0949">S-adenosyl-L-methionine</keyword>
<keyword id="KW-0808">Transferase</keyword>
<proteinExistence type="inferred from homology"/>
<evidence type="ECO:0000255" key="1">
    <source>
        <dbReference type="HAMAP-Rule" id="MF_01579"/>
    </source>
</evidence>
<dbReference type="EC" id="2.1.1.178" evidence="1"/>
<dbReference type="EMBL" id="FM954972">
    <property type="protein sequence ID" value="CAV18574.1"/>
    <property type="molecule type" value="Genomic_DNA"/>
</dbReference>
<dbReference type="SMR" id="B7VNJ8"/>
<dbReference type="STRING" id="575788.VS_1411"/>
<dbReference type="KEGG" id="vsp:VS_1411"/>
<dbReference type="PATRIC" id="fig|575788.5.peg.2717"/>
<dbReference type="eggNOG" id="COG0144">
    <property type="taxonomic scope" value="Bacteria"/>
</dbReference>
<dbReference type="eggNOG" id="COG3270">
    <property type="taxonomic scope" value="Bacteria"/>
</dbReference>
<dbReference type="HOGENOM" id="CLU_005316_6_2_6"/>
<dbReference type="Proteomes" id="UP000009100">
    <property type="component" value="Chromosome 1"/>
</dbReference>
<dbReference type="GO" id="GO:0005737">
    <property type="term" value="C:cytoplasm"/>
    <property type="evidence" value="ECO:0007669"/>
    <property type="project" value="UniProtKB-SubCell"/>
</dbReference>
<dbReference type="GO" id="GO:0003723">
    <property type="term" value="F:RNA binding"/>
    <property type="evidence" value="ECO:0007669"/>
    <property type="project" value="UniProtKB-KW"/>
</dbReference>
<dbReference type="GO" id="GO:0009383">
    <property type="term" value="F:rRNA (cytosine-C5-)-methyltransferase activity"/>
    <property type="evidence" value="ECO:0007669"/>
    <property type="project" value="TreeGrafter"/>
</dbReference>
<dbReference type="GO" id="GO:0070475">
    <property type="term" value="P:rRNA base methylation"/>
    <property type="evidence" value="ECO:0007669"/>
    <property type="project" value="TreeGrafter"/>
</dbReference>
<dbReference type="CDD" id="cd02440">
    <property type="entry name" value="AdoMet_MTases"/>
    <property type="match status" value="1"/>
</dbReference>
<dbReference type="Gene3D" id="3.10.450.720">
    <property type="match status" value="1"/>
</dbReference>
<dbReference type="Gene3D" id="3.40.50.150">
    <property type="entry name" value="Vaccinia Virus protein VP39"/>
    <property type="match status" value="1"/>
</dbReference>
<dbReference type="HAMAP" id="MF_01579">
    <property type="entry name" value="16SrRNA_methyltr_F"/>
    <property type="match status" value="1"/>
</dbReference>
<dbReference type="InterPro" id="IPR031341">
    <property type="entry name" value="Methyltr_RsmF_N"/>
</dbReference>
<dbReference type="InterPro" id="IPR049560">
    <property type="entry name" value="MeTrfase_RsmB-F_NOP2_cat"/>
</dbReference>
<dbReference type="InterPro" id="IPR001678">
    <property type="entry name" value="MeTrfase_RsmB-F_NOP2_dom"/>
</dbReference>
<dbReference type="InterPro" id="IPR027391">
    <property type="entry name" value="Nol1_Nop2_Fmu_2"/>
</dbReference>
<dbReference type="InterPro" id="IPR011023">
    <property type="entry name" value="Nop2p"/>
</dbReference>
<dbReference type="InterPro" id="IPR023267">
    <property type="entry name" value="RCMT"/>
</dbReference>
<dbReference type="InterPro" id="IPR023545">
    <property type="entry name" value="rRNA_ssu_MeTfrase_F"/>
</dbReference>
<dbReference type="InterPro" id="IPR018314">
    <property type="entry name" value="RsmB/NOL1/NOP2-like_CS"/>
</dbReference>
<dbReference type="InterPro" id="IPR029063">
    <property type="entry name" value="SAM-dependent_MTases_sf"/>
</dbReference>
<dbReference type="InterPro" id="IPR048457">
    <property type="entry name" value="YebU_pre-PUA_dom"/>
</dbReference>
<dbReference type="NCBIfam" id="TIGR00446">
    <property type="entry name" value="nop2p"/>
    <property type="match status" value="1"/>
</dbReference>
<dbReference type="NCBIfam" id="NF008898">
    <property type="entry name" value="PRK11933.1"/>
    <property type="match status" value="1"/>
</dbReference>
<dbReference type="PANTHER" id="PTHR22807:SF30">
    <property type="entry name" value="28S RRNA (CYTOSINE(4447)-C(5))-METHYLTRANSFERASE-RELATED"/>
    <property type="match status" value="1"/>
</dbReference>
<dbReference type="PANTHER" id="PTHR22807">
    <property type="entry name" value="NOP2 YEAST -RELATED NOL1/NOP2/FMU SUN DOMAIN-CONTAINING"/>
    <property type="match status" value="1"/>
</dbReference>
<dbReference type="Pfam" id="PF01189">
    <property type="entry name" value="Methyltr_RsmB-F"/>
    <property type="match status" value="1"/>
</dbReference>
<dbReference type="Pfam" id="PF17125">
    <property type="entry name" value="Methyltr_RsmF_N"/>
    <property type="match status" value="1"/>
</dbReference>
<dbReference type="Pfam" id="PF13636">
    <property type="entry name" value="Methyltranf_PUA"/>
    <property type="match status" value="1"/>
</dbReference>
<dbReference type="Pfam" id="PF21150">
    <property type="entry name" value="YebU_pre-PUA_dom"/>
    <property type="match status" value="1"/>
</dbReference>
<dbReference type="PRINTS" id="PR02008">
    <property type="entry name" value="RCMTFAMILY"/>
</dbReference>
<dbReference type="SUPFAM" id="SSF53335">
    <property type="entry name" value="S-adenosyl-L-methionine-dependent methyltransferases"/>
    <property type="match status" value="1"/>
</dbReference>
<dbReference type="PROSITE" id="PS01153">
    <property type="entry name" value="NOL1_NOP2_SUN"/>
    <property type="match status" value="1"/>
</dbReference>
<dbReference type="PROSITE" id="PS51686">
    <property type="entry name" value="SAM_MT_RSMB_NOP"/>
    <property type="match status" value="1"/>
</dbReference>
<organism>
    <name type="scientific">Vibrio atlanticus (strain LGP32)</name>
    <name type="common">Vibrio splendidus (strain Mel32)</name>
    <dbReference type="NCBI Taxonomy" id="575788"/>
    <lineage>
        <taxon>Bacteria</taxon>
        <taxon>Pseudomonadati</taxon>
        <taxon>Pseudomonadota</taxon>
        <taxon>Gammaproteobacteria</taxon>
        <taxon>Vibrionales</taxon>
        <taxon>Vibrionaceae</taxon>
        <taxon>Vibrio</taxon>
    </lineage>
</organism>
<gene>
    <name evidence="1" type="primary">rsmF</name>
    <name type="ordered locus">VS_1411</name>
</gene>
<sequence>MHANVYIPEEFLTHIESIMPSHLDMASFVASCQKPLRKSIRVNTLKISVEDFLVRAKEKGWELEPVPWCETGFWITADESEAPLGNTAEHMSGLFYIQEASSMMPPSALFQGEADYQAVLDTAAAPGSKTTQIAALMNNRGVLVANEYAASRVKVLHANIERCGVRNAALSNFDGRVFGGWLPEQFDAVLLDAPCSGEGTIRKDADAMKNWTYQSVVDIADTQKDLIESAFHALKPNGVLVYSTCTLSTEENQQVCHHLKETFGDAVEFESLESLFDNAKATTTEEGFLHIFPQVYDSEGFFVARIRKLASVTPPEVKKRLGKFPFEKASKKAQQEVAEQLLGALDIELPSDTQVWIRDKDVWLFPEALEPMIGEFRFSRMGIKIAETHKKGYRWQHQVATTLATGNEANIVDLSIEDAREWFMGRDVRPEGLSGEGEVLVKYNGAIIGLGKWVGNRVKNGLPRELVRDKNLF</sequence>
<protein>
    <recommendedName>
        <fullName evidence="1">Ribosomal RNA small subunit methyltransferase F</fullName>
        <ecNumber evidence="1">2.1.1.178</ecNumber>
    </recommendedName>
    <alternativeName>
        <fullName evidence="1">16S rRNA m5C1407 methyltransferase</fullName>
    </alternativeName>
    <alternativeName>
        <fullName evidence="1">rRNA (cytosine-C(5)-)-methyltransferase RsmF</fullName>
    </alternativeName>
</protein>
<feature type="chain" id="PRO_1000185647" description="Ribosomal RNA small subunit methyltransferase F">
    <location>
        <begin position="1"/>
        <end position="473"/>
    </location>
</feature>
<feature type="active site" description="Nucleophile" evidence="1">
    <location>
        <position position="245"/>
    </location>
</feature>
<feature type="binding site" evidence="1">
    <location>
        <begin position="123"/>
        <end position="129"/>
    </location>
    <ligand>
        <name>S-adenosyl-L-methionine</name>
        <dbReference type="ChEBI" id="CHEBI:59789"/>
    </ligand>
</feature>
<feature type="binding site" evidence="1">
    <location>
        <position position="147"/>
    </location>
    <ligand>
        <name>S-adenosyl-L-methionine</name>
        <dbReference type="ChEBI" id="CHEBI:59789"/>
    </ligand>
</feature>
<feature type="binding site" evidence="1">
    <location>
        <position position="174"/>
    </location>
    <ligand>
        <name>S-adenosyl-L-methionine</name>
        <dbReference type="ChEBI" id="CHEBI:59789"/>
    </ligand>
</feature>
<feature type="binding site" evidence="1">
    <location>
        <position position="192"/>
    </location>
    <ligand>
        <name>S-adenosyl-L-methionine</name>
        <dbReference type="ChEBI" id="CHEBI:59789"/>
    </ligand>
</feature>
<name>RSMF_VIBA3</name>